<keyword id="KW-0067">ATP-binding</keyword>
<keyword id="KW-0418">Kinase</keyword>
<keyword id="KW-0460">Magnesium</keyword>
<keyword id="KW-0479">Metal-binding</keyword>
<keyword id="KW-0547">Nucleotide-binding</keyword>
<keyword id="KW-1185">Reference proteome</keyword>
<keyword id="KW-0711">Selenium</keyword>
<keyword id="KW-0808">Transferase</keyword>
<name>SELD_PELPD</name>
<comment type="function">
    <text evidence="1">Synthesizes selenophosphate from selenide and ATP.</text>
</comment>
<comment type="catalytic activity">
    <reaction evidence="1">
        <text>hydrogenselenide + ATP + H2O = selenophosphate + AMP + phosphate + 2 H(+)</text>
        <dbReference type="Rhea" id="RHEA:18737"/>
        <dbReference type="ChEBI" id="CHEBI:15377"/>
        <dbReference type="ChEBI" id="CHEBI:15378"/>
        <dbReference type="ChEBI" id="CHEBI:16144"/>
        <dbReference type="ChEBI" id="CHEBI:29317"/>
        <dbReference type="ChEBI" id="CHEBI:30616"/>
        <dbReference type="ChEBI" id="CHEBI:43474"/>
        <dbReference type="ChEBI" id="CHEBI:456215"/>
        <dbReference type="EC" id="2.7.9.3"/>
    </reaction>
</comment>
<comment type="cofactor">
    <cofactor evidence="1">
        <name>Mg(2+)</name>
        <dbReference type="ChEBI" id="CHEBI:18420"/>
    </cofactor>
    <text evidence="1">Binds 1 Mg(2+) ion per monomer.</text>
</comment>
<comment type="subunit">
    <text evidence="1">Homodimer.</text>
</comment>
<comment type="similarity">
    <text evidence="1">Belongs to the selenophosphate synthase 1 family. Class I subfamily.</text>
</comment>
<sequence>MTDTTIRLTQTVKGAGCAAKLAPGDLDRALCGLDLPVDPNLLVGLERADDAGVYRISDDLALVQTIDFFPPMVDDPYSFGQIAAANALSDIYAMGGVPKTAMNVVAFPAKTMDISVLRSVIEGGLDKMREAGVVLVGGHTVEDSELKYGLSVTGFIHPDRILTKKNLQTGDCLILTKPLGTGIVSTAIKAGLAGSDLTERVIRNMTALNRDAALVMGDFTVHACTDITGFGFLGHLAEMVVDSGCGVRIIAADVPHYPEALEWADMGLIPGGAYNNRDFRGMFVDFGAAVSRRFRDLLFDPQTSGGLLIAVAPNEAEQLVAALKATGIECAAVVGEVVEEPLERIVVE</sequence>
<dbReference type="EC" id="2.7.9.3" evidence="1"/>
<dbReference type="EMBL" id="CP000482">
    <property type="protein sequence ID" value="ABK99319.1"/>
    <property type="molecule type" value="Genomic_DNA"/>
</dbReference>
<dbReference type="RefSeq" id="WP_011735596.1">
    <property type="nucleotide sequence ID" value="NC_008609.1"/>
</dbReference>
<dbReference type="SMR" id="A1APP9"/>
<dbReference type="STRING" id="338966.Ppro_1707"/>
<dbReference type="KEGG" id="ppd:Ppro_1707"/>
<dbReference type="eggNOG" id="COG0709">
    <property type="taxonomic scope" value="Bacteria"/>
</dbReference>
<dbReference type="HOGENOM" id="CLU_032859_0_1_7"/>
<dbReference type="OrthoDB" id="9767928at2"/>
<dbReference type="Proteomes" id="UP000006732">
    <property type="component" value="Chromosome"/>
</dbReference>
<dbReference type="GO" id="GO:0005737">
    <property type="term" value="C:cytoplasm"/>
    <property type="evidence" value="ECO:0007669"/>
    <property type="project" value="TreeGrafter"/>
</dbReference>
<dbReference type="GO" id="GO:0005524">
    <property type="term" value="F:ATP binding"/>
    <property type="evidence" value="ECO:0007669"/>
    <property type="project" value="UniProtKB-UniRule"/>
</dbReference>
<dbReference type="GO" id="GO:0000287">
    <property type="term" value="F:magnesium ion binding"/>
    <property type="evidence" value="ECO:0007669"/>
    <property type="project" value="UniProtKB-UniRule"/>
</dbReference>
<dbReference type="GO" id="GO:0004756">
    <property type="term" value="F:selenide, water dikinase activity"/>
    <property type="evidence" value="ECO:0007669"/>
    <property type="project" value="UniProtKB-UniRule"/>
</dbReference>
<dbReference type="GO" id="GO:0016260">
    <property type="term" value="P:selenocysteine biosynthetic process"/>
    <property type="evidence" value="ECO:0007669"/>
    <property type="project" value="InterPro"/>
</dbReference>
<dbReference type="CDD" id="cd02195">
    <property type="entry name" value="SelD"/>
    <property type="match status" value="1"/>
</dbReference>
<dbReference type="FunFam" id="3.30.1330.10:FF:000003">
    <property type="entry name" value="Selenide, water dikinase"/>
    <property type="match status" value="1"/>
</dbReference>
<dbReference type="FunFam" id="3.90.650.10:FF:000004">
    <property type="entry name" value="Selenide, water dikinase"/>
    <property type="match status" value="1"/>
</dbReference>
<dbReference type="Gene3D" id="3.90.650.10">
    <property type="entry name" value="PurM-like C-terminal domain"/>
    <property type="match status" value="1"/>
</dbReference>
<dbReference type="Gene3D" id="3.30.1330.10">
    <property type="entry name" value="PurM-like, N-terminal domain"/>
    <property type="match status" value="1"/>
</dbReference>
<dbReference type="HAMAP" id="MF_00625">
    <property type="entry name" value="SelD"/>
    <property type="match status" value="1"/>
</dbReference>
<dbReference type="InterPro" id="IPR010918">
    <property type="entry name" value="PurM-like_C_dom"/>
</dbReference>
<dbReference type="InterPro" id="IPR036676">
    <property type="entry name" value="PurM-like_C_sf"/>
</dbReference>
<dbReference type="InterPro" id="IPR016188">
    <property type="entry name" value="PurM-like_N"/>
</dbReference>
<dbReference type="InterPro" id="IPR036921">
    <property type="entry name" value="PurM-like_N_sf"/>
</dbReference>
<dbReference type="InterPro" id="IPR023061">
    <property type="entry name" value="SelD_I"/>
</dbReference>
<dbReference type="InterPro" id="IPR004536">
    <property type="entry name" value="SPS/SelD"/>
</dbReference>
<dbReference type="NCBIfam" id="NF002098">
    <property type="entry name" value="PRK00943.1"/>
    <property type="match status" value="1"/>
</dbReference>
<dbReference type="NCBIfam" id="TIGR00476">
    <property type="entry name" value="selD"/>
    <property type="match status" value="1"/>
</dbReference>
<dbReference type="PANTHER" id="PTHR10256:SF0">
    <property type="entry name" value="INACTIVE SELENIDE, WATER DIKINASE-LIKE PROTEIN-RELATED"/>
    <property type="match status" value="1"/>
</dbReference>
<dbReference type="PANTHER" id="PTHR10256">
    <property type="entry name" value="SELENIDE, WATER DIKINASE"/>
    <property type="match status" value="1"/>
</dbReference>
<dbReference type="Pfam" id="PF00586">
    <property type="entry name" value="AIRS"/>
    <property type="match status" value="1"/>
</dbReference>
<dbReference type="Pfam" id="PF02769">
    <property type="entry name" value="AIRS_C"/>
    <property type="match status" value="1"/>
</dbReference>
<dbReference type="PIRSF" id="PIRSF036407">
    <property type="entry name" value="Selenphspht_syn"/>
    <property type="match status" value="1"/>
</dbReference>
<dbReference type="SUPFAM" id="SSF56042">
    <property type="entry name" value="PurM C-terminal domain-like"/>
    <property type="match status" value="1"/>
</dbReference>
<dbReference type="SUPFAM" id="SSF55326">
    <property type="entry name" value="PurM N-terminal domain-like"/>
    <property type="match status" value="1"/>
</dbReference>
<accession>A1APP9</accession>
<reference key="1">
    <citation type="submission" date="2006-10" db="EMBL/GenBank/DDBJ databases">
        <title>Complete sequence of chromosome of Pelobacter propionicus DSM 2379.</title>
        <authorList>
            <consortium name="US DOE Joint Genome Institute"/>
            <person name="Copeland A."/>
            <person name="Lucas S."/>
            <person name="Lapidus A."/>
            <person name="Barry K."/>
            <person name="Detter J.C."/>
            <person name="Glavina del Rio T."/>
            <person name="Hammon N."/>
            <person name="Israni S."/>
            <person name="Dalin E."/>
            <person name="Tice H."/>
            <person name="Pitluck S."/>
            <person name="Saunders E."/>
            <person name="Brettin T."/>
            <person name="Bruce D."/>
            <person name="Han C."/>
            <person name="Tapia R."/>
            <person name="Schmutz J."/>
            <person name="Larimer F."/>
            <person name="Land M."/>
            <person name="Hauser L."/>
            <person name="Kyrpides N."/>
            <person name="Kim E."/>
            <person name="Lovley D."/>
            <person name="Richardson P."/>
        </authorList>
    </citation>
    <scope>NUCLEOTIDE SEQUENCE [LARGE SCALE GENOMIC DNA]</scope>
    <source>
        <strain>DSM 2379 / NBRC 103807 / OttBd1</strain>
    </source>
</reference>
<organism>
    <name type="scientific">Pelobacter propionicus (strain DSM 2379 / NBRC 103807 / OttBd1)</name>
    <dbReference type="NCBI Taxonomy" id="338966"/>
    <lineage>
        <taxon>Bacteria</taxon>
        <taxon>Pseudomonadati</taxon>
        <taxon>Thermodesulfobacteriota</taxon>
        <taxon>Desulfuromonadia</taxon>
        <taxon>Desulfuromonadales</taxon>
        <taxon>Desulfuromonadaceae</taxon>
        <taxon>Pelobacter</taxon>
    </lineage>
</organism>
<gene>
    <name evidence="1" type="primary">selD</name>
    <name type="ordered locus">Ppro_1707</name>
</gene>
<feature type="chain" id="PRO_1000051600" description="Selenide, water dikinase">
    <location>
        <begin position="1"/>
        <end position="348"/>
    </location>
</feature>
<feature type="active site" evidence="1">
    <location>
        <position position="17"/>
    </location>
</feature>
<feature type="binding site" description="in other chain" evidence="1">
    <location>
        <position position="20"/>
    </location>
    <ligand>
        <name>ATP</name>
        <dbReference type="ChEBI" id="CHEBI:30616"/>
        <note>ligand shared between dimeric partners</note>
    </ligand>
</feature>
<feature type="binding site" description="in other chain" evidence="1">
    <location>
        <begin position="47"/>
        <end position="49"/>
    </location>
    <ligand>
        <name>ATP</name>
        <dbReference type="ChEBI" id="CHEBI:30616"/>
        <note>ligand shared between dimeric partners</note>
    </ligand>
</feature>
<feature type="binding site" evidence="1">
    <location>
        <position position="50"/>
    </location>
    <ligand>
        <name>Mg(2+)</name>
        <dbReference type="ChEBI" id="CHEBI:18420"/>
    </ligand>
</feature>
<feature type="binding site" description="in other chain" evidence="1">
    <location>
        <position position="67"/>
    </location>
    <ligand>
        <name>ATP</name>
        <dbReference type="ChEBI" id="CHEBI:30616"/>
        <note>ligand shared between dimeric partners</note>
    </ligand>
</feature>
<feature type="binding site" description="in other chain" evidence="1">
    <location>
        <position position="90"/>
    </location>
    <ligand>
        <name>ATP</name>
        <dbReference type="ChEBI" id="CHEBI:30616"/>
        <note>ligand shared between dimeric partners</note>
    </ligand>
</feature>
<feature type="binding site" evidence="1">
    <location>
        <position position="90"/>
    </location>
    <ligand>
        <name>Mg(2+)</name>
        <dbReference type="ChEBI" id="CHEBI:18420"/>
    </ligand>
</feature>
<feature type="binding site" evidence="1">
    <location>
        <begin position="138"/>
        <end position="140"/>
    </location>
    <ligand>
        <name>ATP</name>
        <dbReference type="ChEBI" id="CHEBI:30616"/>
        <note>ligand shared between dimeric partners</note>
    </ligand>
</feature>
<feature type="binding site" evidence="1">
    <location>
        <position position="226"/>
    </location>
    <ligand>
        <name>Mg(2+)</name>
        <dbReference type="ChEBI" id="CHEBI:18420"/>
    </ligand>
</feature>
<feature type="site" description="Important for catalytic activity" evidence="1">
    <location>
        <position position="20"/>
    </location>
</feature>
<protein>
    <recommendedName>
        <fullName evidence="1">Selenide, water dikinase</fullName>
        <ecNumber evidence="1">2.7.9.3</ecNumber>
    </recommendedName>
    <alternativeName>
        <fullName evidence="1">Selenium donor protein</fullName>
    </alternativeName>
    <alternativeName>
        <fullName evidence="1">Selenophosphate synthase</fullName>
    </alternativeName>
</protein>
<proteinExistence type="inferred from homology"/>
<evidence type="ECO:0000255" key="1">
    <source>
        <dbReference type="HAMAP-Rule" id="MF_00625"/>
    </source>
</evidence>